<accession>O88520</accession>
<accession>Q3UJH6</accession>
<accession>Q8BVL0</accession>
<accession>Q91VH8</accession>
<sequence>MSSSLGKEKDSKEKDPKVPSAKEREKESKASGGFGKESKEKEPKAKGKDAKDGKKESSAAQPGVAFSVDNTIKRPNPAPGTRKKSSNAEVIKELNKCREENSMRLDLSKRSIHILPPSVKELTQLTELYLYSNKLQSLPAEVGCLVNLMTLALSENSLTSLPDSLDNLKKLRMLDLRHNKLREIPSVVYRLDSLTTLYLRFNRITTVEKDIKNLPKLSMLSIRENKIKQLPAEIGELCNLITLDVAHNQLEHLPKEIGNCTQITNLDLQHNDLLDLPDTIGNLSSLNRLGLRYNRLSAIPRSLAKCSALEELNLENNNISTLPESLLSSLVKLNSLTLARNCFQLYPVGGPSQFSTIYSLNMEHNRINKIPFGIFSRAKVLSKLNMKDNQLTSLPLDFGTWTSMVELNLATNQLTKIPEDVSGLVSLEVLILSNNLLKKLPHGLGNLRKLRELDLEENKLESLPNEIAYLKDLQKLVLTNNQLSTLPRGIGHLTNLTHLGLGENLLTHLPEEIGTLENLEELYLNDNPNLHSLPFELALCSKLSIMSIENCPLSHLPPQIVAGGPSFIIQFLKMQGPYRAMV</sequence>
<feature type="chain" id="PRO_0000097738" description="Leucine-rich repeat protein SHOC-2">
    <location>
        <begin position="1"/>
        <end position="582"/>
    </location>
</feature>
<feature type="repeat" description="LRR 1" evidence="1">
    <location>
        <begin position="101"/>
        <end position="122"/>
    </location>
</feature>
<feature type="repeat" description="LRR 2" evidence="1">
    <location>
        <begin position="124"/>
        <end position="145"/>
    </location>
</feature>
<feature type="repeat" description="LRR 3" evidence="1">
    <location>
        <begin position="147"/>
        <end position="169"/>
    </location>
</feature>
<feature type="repeat" description="LRR 4" evidence="1">
    <location>
        <begin position="170"/>
        <end position="191"/>
    </location>
</feature>
<feature type="repeat" description="LRR 5" evidence="1">
    <location>
        <begin position="193"/>
        <end position="215"/>
    </location>
</feature>
<feature type="repeat" description="LRR 6" evidence="1">
    <location>
        <begin position="216"/>
        <end position="237"/>
    </location>
</feature>
<feature type="repeat" description="LRR 7" evidence="1">
    <location>
        <begin position="239"/>
        <end position="260"/>
    </location>
</feature>
<feature type="repeat" description="LRR 8" evidence="1">
    <location>
        <begin position="262"/>
        <end position="283"/>
    </location>
</feature>
<feature type="repeat" description="LRR 9" evidence="1">
    <location>
        <begin position="285"/>
        <end position="307"/>
    </location>
</feature>
<feature type="repeat" description="LRR 10" evidence="1">
    <location>
        <begin position="308"/>
        <end position="329"/>
    </location>
</feature>
<feature type="repeat" description="LRR 11" evidence="1">
    <location>
        <begin position="332"/>
        <end position="353"/>
    </location>
</feature>
<feature type="repeat" description="LRR 12" evidence="1">
    <location>
        <begin position="356"/>
        <end position="377"/>
    </location>
</feature>
<feature type="repeat" description="LRR 13" evidence="1">
    <location>
        <begin position="380"/>
        <end position="400"/>
    </location>
</feature>
<feature type="repeat" description="LRR 14" evidence="1">
    <location>
        <begin position="403"/>
        <end position="424"/>
    </location>
</feature>
<feature type="repeat" description="LRR 15" evidence="1">
    <location>
        <begin position="426"/>
        <end position="448"/>
    </location>
</feature>
<feature type="repeat" description="LRR 16" evidence="1">
    <location>
        <begin position="449"/>
        <end position="470"/>
    </location>
</feature>
<feature type="repeat" description="LRR 17" evidence="1">
    <location>
        <begin position="472"/>
        <end position="494"/>
    </location>
</feature>
<feature type="repeat" description="LRR 18" evidence="1">
    <location>
        <begin position="495"/>
        <end position="516"/>
    </location>
</feature>
<feature type="repeat" description="LRR 19" evidence="1">
    <location>
        <begin position="518"/>
        <end position="540"/>
    </location>
</feature>
<feature type="repeat" description="LRR 20" evidence="1">
    <location>
        <begin position="542"/>
        <end position="563"/>
    </location>
</feature>
<feature type="region of interest" description="Disordered" evidence="2">
    <location>
        <begin position="1"/>
        <end position="88"/>
    </location>
</feature>
<feature type="short sequence motif" description="RVxF motif; important for interaction with PP1c" evidence="1">
    <location>
        <begin position="63"/>
        <end position="66"/>
    </location>
</feature>
<feature type="compositionally biased region" description="Basic and acidic residues" evidence="2">
    <location>
        <begin position="1"/>
        <end position="29"/>
    </location>
</feature>
<feature type="compositionally biased region" description="Basic and acidic residues" evidence="2">
    <location>
        <begin position="36"/>
        <end position="57"/>
    </location>
</feature>
<feature type="sequence conflict" description="In Ref. 1; AAC40175." evidence="3" ref="1">
    <original>S</original>
    <variation>F</variation>
    <location>
        <position position="11"/>
    </location>
</feature>
<dbReference type="EMBL" id="AF068921">
    <property type="protein sequence ID" value="AAC40175.1"/>
    <property type="molecule type" value="mRNA"/>
</dbReference>
<dbReference type="EMBL" id="DQ479926">
    <property type="protein sequence ID" value="ABF48505.1"/>
    <property type="molecule type" value="Genomic_DNA"/>
</dbReference>
<dbReference type="EMBL" id="AK077798">
    <property type="protein sequence ID" value="BAC37016.1"/>
    <property type="molecule type" value="mRNA"/>
</dbReference>
<dbReference type="EMBL" id="AK146447">
    <property type="protein sequence ID" value="BAE27179.1"/>
    <property type="molecule type" value="mRNA"/>
</dbReference>
<dbReference type="EMBL" id="BC013722">
    <property type="protein sequence ID" value="AAH13722.1"/>
    <property type="molecule type" value="mRNA"/>
</dbReference>
<dbReference type="EMBL" id="BC049775">
    <property type="protein sequence ID" value="AAH49775.1"/>
    <property type="molecule type" value="mRNA"/>
</dbReference>
<dbReference type="EMBL" id="BC083060">
    <property type="protein sequence ID" value="AAH83060.1"/>
    <property type="molecule type" value="mRNA"/>
</dbReference>
<dbReference type="CCDS" id="CCDS29904.1"/>
<dbReference type="RefSeq" id="NP_001161977.1">
    <property type="nucleotide sequence ID" value="NM_001168505.1"/>
</dbReference>
<dbReference type="RefSeq" id="NP_001342171.1">
    <property type="nucleotide sequence ID" value="NM_001355242.2"/>
</dbReference>
<dbReference type="RefSeq" id="NP_001401592.1">
    <property type="nucleotide sequence ID" value="NM_001414663.1"/>
</dbReference>
<dbReference type="RefSeq" id="NP_001401593.1">
    <property type="nucleotide sequence ID" value="NM_001414664.1"/>
</dbReference>
<dbReference type="RefSeq" id="NP_062632.2">
    <property type="nucleotide sequence ID" value="NM_019658.6"/>
</dbReference>
<dbReference type="RefSeq" id="XP_006527291.1">
    <property type="nucleotide sequence ID" value="XM_006527228.5"/>
</dbReference>
<dbReference type="RefSeq" id="XP_011245601.1">
    <property type="nucleotide sequence ID" value="XM_011247299.2"/>
</dbReference>
<dbReference type="RefSeq" id="XP_017173749.1">
    <property type="nucleotide sequence ID" value="XM_017318260.1"/>
</dbReference>
<dbReference type="RefSeq" id="XP_036017535.1">
    <property type="nucleotide sequence ID" value="XM_036161642.1"/>
</dbReference>
<dbReference type="SMR" id="O88520"/>
<dbReference type="BioGRID" id="207949">
    <property type="interactions" value="54"/>
</dbReference>
<dbReference type="FunCoup" id="O88520">
    <property type="interactions" value="5636"/>
</dbReference>
<dbReference type="IntAct" id="O88520">
    <property type="interactions" value="50"/>
</dbReference>
<dbReference type="MINT" id="O88520"/>
<dbReference type="STRING" id="10090.ENSMUSP00000025932"/>
<dbReference type="iPTMnet" id="O88520"/>
<dbReference type="PhosphoSitePlus" id="O88520"/>
<dbReference type="PaxDb" id="10090-ENSMUSP00000025932"/>
<dbReference type="PeptideAtlas" id="O88520"/>
<dbReference type="ProteomicsDB" id="255414"/>
<dbReference type="Pumba" id="O88520"/>
<dbReference type="Antibodypedia" id="1953">
    <property type="antibodies" value="248 antibodies from 33 providers"/>
</dbReference>
<dbReference type="DNASU" id="56392"/>
<dbReference type="Ensembl" id="ENSMUST00000025932.9">
    <property type="protein sequence ID" value="ENSMUSP00000025932.8"/>
    <property type="gene ID" value="ENSMUSG00000024976.15"/>
</dbReference>
<dbReference type="Ensembl" id="ENSMUST00000169861.9">
    <property type="protein sequence ID" value="ENSMUSP00000127932.2"/>
    <property type="gene ID" value="ENSMUSG00000024976.15"/>
</dbReference>
<dbReference type="GeneID" id="56392"/>
<dbReference type="KEGG" id="mmu:56392"/>
<dbReference type="UCSC" id="uc008hxg.2">
    <property type="organism name" value="mouse"/>
</dbReference>
<dbReference type="AGR" id="MGI:1927197"/>
<dbReference type="CTD" id="8036"/>
<dbReference type="MGI" id="MGI:1927197">
    <property type="gene designation" value="Shoc2"/>
</dbReference>
<dbReference type="VEuPathDB" id="HostDB:ENSMUSG00000024976"/>
<dbReference type="eggNOG" id="KOG0619">
    <property type="taxonomic scope" value="Eukaryota"/>
</dbReference>
<dbReference type="GeneTree" id="ENSGT00940000156270"/>
<dbReference type="HOGENOM" id="CLU_000288_18_23_1"/>
<dbReference type="InParanoid" id="O88520"/>
<dbReference type="OMA" id="NQFTSYP"/>
<dbReference type="OrthoDB" id="676979at2759"/>
<dbReference type="PhylomeDB" id="O88520"/>
<dbReference type="TreeFam" id="TF315742"/>
<dbReference type="Reactome" id="R-MMU-5673000">
    <property type="pathway name" value="RAF activation"/>
</dbReference>
<dbReference type="BioGRID-ORCS" id="56392">
    <property type="hits" value="15 hits in 81 CRISPR screens"/>
</dbReference>
<dbReference type="ChiTaRS" id="Shoc2">
    <property type="organism name" value="mouse"/>
</dbReference>
<dbReference type="PRO" id="PR:O88520"/>
<dbReference type="Proteomes" id="UP000000589">
    <property type="component" value="Chromosome 19"/>
</dbReference>
<dbReference type="RNAct" id="O88520">
    <property type="molecule type" value="protein"/>
</dbReference>
<dbReference type="Bgee" id="ENSMUSG00000024976">
    <property type="expression patterns" value="Expressed in undifferentiated genital tubercle and 257 other cell types or tissues"/>
</dbReference>
<dbReference type="ExpressionAtlas" id="O88520">
    <property type="expression patterns" value="baseline and differential"/>
</dbReference>
<dbReference type="GO" id="GO:0005737">
    <property type="term" value="C:cytoplasm"/>
    <property type="evidence" value="ECO:0000250"/>
    <property type="project" value="UniProtKB"/>
</dbReference>
<dbReference type="GO" id="GO:0005829">
    <property type="term" value="C:cytosol"/>
    <property type="evidence" value="ECO:0007669"/>
    <property type="project" value="Ensembl"/>
</dbReference>
<dbReference type="GO" id="GO:0005654">
    <property type="term" value="C:nucleoplasm"/>
    <property type="evidence" value="ECO:0007669"/>
    <property type="project" value="Ensembl"/>
</dbReference>
<dbReference type="GO" id="GO:0005634">
    <property type="term" value="C:nucleus"/>
    <property type="evidence" value="ECO:0000250"/>
    <property type="project" value="UniProtKB"/>
</dbReference>
<dbReference type="GO" id="GO:0000164">
    <property type="term" value="C:protein phosphatase type 1 complex"/>
    <property type="evidence" value="ECO:0000250"/>
    <property type="project" value="UniProtKB"/>
</dbReference>
<dbReference type="GO" id="GO:0008157">
    <property type="term" value="F:protein phosphatase 1 binding"/>
    <property type="evidence" value="ECO:0007669"/>
    <property type="project" value="Ensembl"/>
</dbReference>
<dbReference type="GO" id="GO:0019903">
    <property type="term" value="F:protein phosphatase binding"/>
    <property type="evidence" value="ECO:0000250"/>
    <property type="project" value="UniProtKB"/>
</dbReference>
<dbReference type="GO" id="GO:0071378">
    <property type="term" value="P:cellular response to growth hormone stimulus"/>
    <property type="evidence" value="ECO:0007669"/>
    <property type="project" value="Ensembl"/>
</dbReference>
<dbReference type="GO" id="GO:2000178">
    <property type="term" value="P:negative regulation of neural precursor cell proliferation"/>
    <property type="evidence" value="ECO:0007669"/>
    <property type="project" value="Ensembl"/>
</dbReference>
<dbReference type="GO" id="GO:0045665">
    <property type="term" value="P:negative regulation of neuron differentiation"/>
    <property type="evidence" value="ECO:0007669"/>
    <property type="project" value="Ensembl"/>
</dbReference>
<dbReference type="GO" id="GO:0038180">
    <property type="term" value="P:nerve growth factor signaling pathway"/>
    <property type="evidence" value="ECO:0007669"/>
    <property type="project" value="Ensembl"/>
</dbReference>
<dbReference type="GO" id="GO:0045666">
    <property type="term" value="P:positive regulation of neuron differentiation"/>
    <property type="evidence" value="ECO:0007669"/>
    <property type="project" value="Ensembl"/>
</dbReference>
<dbReference type="GO" id="GO:0010976">
    <property type="term" value="P:positive regulation of neuron projection development"/>
    <property type="evidence" value="ECO:0007669"/>
    <property type="project" value="Ensembl"/>
</dbReference>
<dbReference type="GO" id="GO:0046579">
    <property type="term" value="P:positive regulation of Ras protein signal transduction"/>
    <property type="evidence" value="ECO:0000250"/>
    <property type="project" value="UniProtKB"/>
</dbReference>
<dbReference type="GO" id="GO:0043408">
    <property type="term" value="P:regulation of MAPK cascade"/>
    <property type="evidence" value="ECO:0007669"/>
    <property type="project" value="Ensembl"/>
</dbReference>
<dbReference type="FunFam" id="3.80.10.10:FF:000115">
    <property type="entry name" value="leucine-rich repeat protein SHOC-2"/>
    <property type="match status" value="1"/>
</dbReference>
<dbReference type="FunFam" id="3.80.10.10:FF:000327">
    <property type="entry name" value="leucine-rich repeat protein SHOC-2 isoform X2"/>
    <property type="match status" value="1"/>
</dbReference>
<dbReference type="FunFam" id="3.80.10.10:FF:000407">
    <property type="entry name" value="leucine-rich repeat protein SHOC-2 isoform X2"/>
    <property type="match status" value="1"/>
</dbReference>
<dbReference type="Gene3D" id="3.80.10.10">
    <property type="entry name" value="Ribonuclease Inhibitor"/>
    <property type="match status" value="4"/>
</dbReference>
<dbReference type="InterPro" id="IPR001611">
    <property type="entry name" value="Leu-rich_rpt"/>
</dbReference>
<dbReference type="InterPro" id="IPR003591">
    <property type="entry name" value="Leu-rich_rpt_typical-subtyp"/>
</dbReference>
<dbReference type="InterPro" id="IPR032675">
    <property type="entry name" value="LRR_dom_sf"/>
</dbReference>
<dbReference type="InterPro" id="IPR050216">
    <property type="entry name" value="LRR_domain-containing"/>
</dbReference>
<dbReference type="InterPro" id="IPR055414">
    <property type="entry name" value="LRR_R13L4/SHOC2-like"/>
</dbReference>
<dbReference type="PANTHER" id="PTHR48051">
    <property type="match status" value="1"/>
</dbReference>
<dbReference type="PANTHER" id="PTHR48051:SF54">
    <property type="entry name" value="LEUCINE-RICH REPEAT-CONTAINING PROTEIN"/>
    <property type="match status" value="1"/>
</dbReference>
<dbReference type="Pfam" id="PF23598">
    <property type="entry name" value="LRR_14"/>
    <property type="match status" value="2"/>
</dbReference>
<dbReference type="Pfam" id="PF13855">
    <property type="entry name" value="LRR_8"/>
    <property type="match status" value="1"/>
</dbReference>
<dbReference type="SMART" id="SM00364">
    <property type="entry name" value="LRR_BAC"/>
    <property type="match status" value="12"/>
</dbReference>
<dbReference type="SMART" id="SM00365">
    <property type="entry name" value="LRR_SD22"/>
    <property type="match status" value="6"/>
</dbReference>
<dbReference type="SMART" id="SM00369">
    <property type="entry name" value="LRR_TYP"/>
    <property type="match status" value="16"/>
</dbReference>
<dbReference type="SUPFAM" id="SSF52058">
    <property type="entry name" value="L domain-like"/>
    <property type="match status" value="2"/>
</dbReference>
<dbReference type="PROSITE" id="PS51450">
    <property type="entry name" value="LRR"/>
    <property type="match status" value="17"/>
</dbReference>
<keyword id="KW-0963">Cytoplasm</keyword>
<keyword id="KW-0433">Leucine-rich repeat</keyword>
<keyword id="KW-0539">Nucleus</keyword>
<keyword id="KW-1185">Reference proteome</keyword>
<keyword id="KW-0677">Repeat</keyword>
<reference key="1">
    <citation type="journal article" date="1998" name="Cell">
        <title>SUR-8, a conserved Ras-binding protein with leucine-rich repeats, positively regulates Ras-mediated signaling in C. elegans.</title>
        <authorList>
            <person name="Sieburth D.S."/>
            <person name="Sun Q."/>
            <person name="Han M."/>
        </authorList>
    </citation>
    <scope>NUCLEOTIDE SEQUENCE [MRNA]</scope>
</reference>
<reference key="2">
    <citation type="journal article" date="2006" name="Nat. Genet.">
        <title>Positional cloning of Sorcs1, a type 2 diabetes quantitative trait locus.</title>
        <authorList>
            <person name="Clee S.M."/>
            <person name="Yandell B.S."/>
            <person name="Schueler K.M."/>
            <person name="Rabaglia M.E."/>
            <person name="Richards O.C."/>
            <person name="Raines S.M."/>
            <person name="Kabara E.A."/>
            <person name="Klass D.M."/>
            <person name="Mui E.T.-K."/>
            <person name="Stapleton D.S."/>
            <person name="Gray-Keller M.P."/>
            <person name="Young M.B."/>
            <person name="Stoehr J.P."/>
            <person name="Lan H."/>
            <person name="Boronenkov I."/>
            <person name="Raess P.W."/>
            <person name="Flowers M.T."/>
            <person name="Attie A.D."/>
        </authorList>
    </citation>
    <scope>NUCLEOTIDE SEQUENCE [GENOMIC DNA]</scope>
</reference>
<reference key="3">
    <citation type="journal article" date="2005" name="Science">
        <title>The transcriptional landscape of the mammalian genome.</title>
        <authorList>
            <person name="Carninci P."/>
            <person name="Kasukawa T."/>
            <person name="Katayama S."/>
            <person name="Gough J."/>
            <person name="Frith M.C."/>
            <person name="Maeda N."/>
            <person name="Oyama R."/>
            <person name="Ravasi T."/>
            <person name="Lenhard B."/>
            <person name="Wells C."/>
            <person name="Kodzius R."/>
            <person name="Shimokawa K."/>
            <person name="Bajic V.B."/>
            <person name="Brenner S.E."/>
            <person name="Batalov S."/>
            <person name="Forrest A.R."/>
            <person name="Zavolan M."/>
            <person name="Davis M.J."/>
            <person name="Wilming L.G."/>
            <person name="Aidinis V."/>
            <person name="Allen J.E."/>
            <person name="Ambesi-Impiombato A."/>
            <person name="Apweiler R."/>
            <person name="Aturaliya R.N."/>
            <person name="Bailey T.L."/>
            <person name="Bansal M."/>
            <person name="Baxter L."/>
            <person name="Beisel K.W."/>
            <person name="Bersano T."/>
            <person name="Bono H."/>
            <person name="Chalk A.M."/>
            <person name="Chiu K.P."/>
            <person name="Choudhary V."/>
            <person name="Christoffels A."/>
            <person name="Clutterbuck D.R."/>
            <person name="Crowe M.L."/>
            <person name="Dalla E."/>
            <person name="Dalrymple B.P."/>
            <person name="de Bono B."/>
            <person name="Della Gatta G."/>
            <person name="di Bernardo D."/>
            <person name="Down T."/>
            <person name="Engstrom P."/>
            <person name="Fagiolini M."/>
            <person name="Faulkner G."/>
            <person name="Fletcher C.F."/>
            <person name="Fukushima T."/>
            <person name="Furuno M."/>
            <person name="Futaki S."/>
            <person name="Gariboldi M."/>
            <person name="Georgii-Hemming P."/>
            <person name="Gingeras T.R."/>
            <person name="Gojobori T."/>
            <person name="Green R.E."/>
            <person name="Gustincich S."/>
            <person name="Harbers M."/>
            <person name="Hayashi Y."/>
            <person name="Hensch T.K."/>
            <person name="Hirokawa N."/>
            <person name="Hill D."/>
            <person name="Huminiecki L."/>
            <person name="Iacono M."/>
            <person name="Ikeo K."/>
            <person name="Iwama A."/>
            <person name="Ishikawa T."/>
            <person name="Jakt M."/>
            <person name="Kanapin A."/>
            <person name="Katoh M."/>
            <person name="Kawasawa Y."/>
            <person name="Kelso J."/>
            <person name="Kitamura H."/>
            <person name="Kitano H."/>
            <person name="Kollias G."/>
            <person name="Krishnan S.P."/>
            <person name="Kruger A."/>
            <person name="Kummerfeld S.K."/>
            <person name="Kurochkin I.V."/>
            <person name="Lareau L.F."/>
            <person name="Lazarevic D."/>
            <person name="Lipovich L."/>
            <person name="Liu J."/>
            <person name="Liuni S."/>
            <person name="McWilliam S."/>
            <person name="Madan Babu M."/>
            <person name="Madera M."/>
            <person name="Marchionni L."/>
            <person name="Matsuda H."/>
            <person name="Matsuzawa S."/>
            <person name="Miki H."/>
            <person name="Mignone F."/>
            <person name="Miyake S."/>
            <person name="Morris K."/>
            <person name="Mottagui-Tabar S."/>
            <person name="Mulder N."/>
            <person name="Nakano N."/>
            <person name="Nakauchi H."/>
            <person name="Ng P."/>
            <person name="Nilsson R."/>
            <person name="Nishiguchi S."/>
            <person name="Nishikawa S."/>
            <person name="Nori F."/>
            <person name="Ohara O."/>
            <person name="Okazaki Y."/>
            <person name="Orlando V."/>
            <person name="Pang K.C."/>
            <person name="Pavan W.J."/>
            <person name="Pavesi G."/>
            <person name="Pesole G."/>
            <person name="Petrovsky N."/>
            <person name="Piazza S."/>
            <person name="Reed J."/>
            <person name="Reid J.F."/>
            <person name="Ring B.Z."/>
            <person name="Ringwald M."/>
            <person name="Rost B."/>
            <person name="Ruan Y."/>
            <person name="Salzberg S.L."/>
            <person name="Sandelin A."/>
            <person name="Schneider C."/>
            <person name="Schoenbach C."/>
            <person name="Sekiguchi K."/>
            <person name="Semple C.A."/>
            <person name="Seno S."/>
            <person name="Sessa L."/>
            <person name="Sheng Y."/>
            <person name="Shibata Y."/>
            <person name="Shimada H."/>
            <person name="Shimada K."/>
            <person name="Silva D."/>
            <person name="Sinclair B."/>
            <person name="Sperling S."/>
            <person name="Stupka E."/>
            <person name="Sugiura K."/>
            <person name="Sultana R."/>
            <person name="Takenaka Y."/>
            <person name="Taki K."/>
            <person name="Tammoja K."/>
            <person name="Tan S.L."/>
            <person name="Tang S."/>
            <person name="Taylor M.S."/>
            <person name="Tegner J."/>
            <person name="Teichmann S.A."/>
            <person name="Ueda H.R."/>
            <person name="van Nimwegen E."/>
            <person name="Verardo R."/>
            <person name="Wei C.L."/>
            <person name="Yagi K."/>
            <person name="Yamanishi H."/>
            <person name="Zabarovsky E."/>
            <person name="Zhu S."/>
            <person name="Zimmer A."/>
            <person name="Hide W."/>
            <person name="Bult C."/>
            <person name="Grimmond S.M."/>
            <person name="Teasdale R.D."/>
            <person name="Liu E.T."/>
            <person name="Brusic V."/>
            <person name="Quackenbush J."/>
            <person name="Wahlestedt C."/>
            <person name="Mattick J.S."/>
            <person name="Hume D.A."/>
            <person name="Kai C."/>
            <person name="Sasaki D."/>
            <person name="Tomaru Y."/>
            <person name="Fukuda S."/>
            <person name="Kanamori-Katayama M."/>
            <person name="Suzuki M."/>
            <person name="Aoki J."/>
            <person name="Arakawa T."/>
            <person name="Iida J."/>
            <person name="Imamura K."/>
            <person name="Itoh M."/>
            <person name="Kato T."/>
            <person name="Kawaji H."/>
            <person name="Kawagashira N."/>
            <person name="Kawashima T."/>
            <person name="Kojima M."/>
            <person name="Kondo S."/>
            <person name="Konno H."/>
            <person name="Nakano K."/>
            <person name="Ninomiya N."/>
            <person name="Nishio T."/>
            <person name="Okada M."/>
            <person name="Plessy C."/>
            <person name="Shibata K."/>
            <person name="Shiraki T."/>
            <person name="Suzuki S."/>
            <person name="Tagami M."/>
            <person name="Waki K."/>
            <person name="Watahiki A."/>
            <person name="Okamura-Oho Y."/>
            <person name="Suzuki H."/>
            <person name="Kawai J."/>
            <person name="Hayashizaki Y."/>
        </authorList>
    </citation>
    <scope>NUCLEOTIDE SEQUENCE [LARGE SCALE MRNA]</scope>
    <source>
        <strain>C57BL/6J</strain>
        <tissue>Kidney</tissue>
        <tissue>Thymus</tissue>
    </source>
</reference>
<reference key="4">
    <citation type="journal article" date="2004" name="Genome Res.">
        <title>The status, quality, and expansion of the NIH full-length cDNA project: the Mammalian Gene Collection (MGC).</title>
        <authorList>
            <consortium name="The MGC Project Team"/>
        </authorList>
    </citation>
    <scope>NUCLEOTIDE SEQUENCE [LARGE SCALE MRNA]</scope>
    <source>
        <strain>FVB/N</strain>
        <tissue>Limb</tissue>
        <tissue>Mammary gland</tissue>
    </source>
</reference>
<reference key="5">
    <citation type="journal article" date="2010" name="Cell">
        <title>A tissue-specific atlas of mouse protein phosphorylation and expression.</title>
        <authorList>
            <person name="Huttlin E.L."/>
            <person name="Jedrychowski M.P."/>
            <person name="Elias J.E."/>
            <person name="Goswami T."/>
            <person name="Rad R."/>
            <person name="Beausoleil S.A."/>
            <person name="Villen J."/>
            <person name="Haas W."/>
            <person name="Sowa M.E."/>
            <person name="Gygi S.P."/>
        </authorList>
    </citation>
    <scope>IDENTIFICATION BY MASS SPECTROMETRY [LARGE SCALE ANALYSIS]</scope>
    <source>
        <tissue>Brain</tissue>
        <tissue>Lung</tissue>
        <tissue>Pancreas</tissue>
        <tissue>Spleen</tissue>
        <tissue>Testis</tissue>
    </source>
</reference>
<protein>
    <recommendedName>
        <fullName>Leucine-rich repeat protein SHOC-2</fullName>
    </recommendedName>
    <alternativeName>
        <fullName>Protein soc-2 homolog</fullName>
    </alternativeName>
    <alternativeName>
        <fullName>Protein sur-8 homolog</fullName>
    </alternativeName>
</protein>
<gene>
    <name type="primary">Shoc2</name>
</gene>
<name>SHOC2_MOUSE</name>
<proteinExistence type="evidence at protein level"/>
<comment type="function">
    <text evidence="1">Core component of the SHOC2-MRAS-PP1c (SMP) holophosphatase complex that regulates activation of the MAPK pathway (By similarity). Acts as a scaffolding protein in the SMP complex (By similarity). The SMP complex specifically dephosphorylates the inhibitory phosphorylation at 'Ser-259' of RAF1 kinase, 'Ser-365' of BRAF kinase and 'Ser-214' of ARAF kinase, stimulating their kinase activities (By similarity). The SMP complex enhances the dephosphorylation activity and substrate specificity of PP1c (By similarity).</text>
</comment>
<comment type="subunit">
    <text evidence="1">Component of the SHOC2-MRAS-PP1c (SMP) complex consisting of SHOC2, GTP-bound M-Ras/MRAS and the catalytic subunit of protein phosphatase 1 (either PPP1CA, PPP1CB or PPP1CC) (By similarity). SHOC2 and PP1c preferably bind M-Ras/MRAS, but they also bind K-Ras/KRAS, N-Ras/NRAS and H-Ras/HRAS; these interactions are GTP-dependent and both SHOC2 and PP1c are required to form a stable complex (By similarity). Interacts with PP1c in the absence of Ras GTPases (By similarity). Interacts with M-Ras/MRAS and RAF1 (By similarity). Interacts with ERBIN; disrupts the interaction with RAF1 and Ras, preventing the activation of the Ras signaling pathway (By similarity). Interacts with LZTR1 (By similarity).</text>
</comment>
<comment type="subcellular location">
    <subcellularLocation>
        <location evidence="1">Cytoplasm</location>
    </subcellularLocation>
    <subcellularLocation>
        <location evidence="1">Nucleus</location>
    </subcellularLocation>
    <text evidence="1">Translocates from cytoplasm to nucleus upon growth factor stimulation.</text>
</comment>
<comment type="domain">
    <text evidence="1">Contains a N-terminal RVxF motif that is important for interaction with PP1c.</text>
</comment>
<comment type="domain">
    <text evidence="1">PP1c (all isoforms) binds to the concave side of SHOC2, via LRR 2-5, 8-11, and 13-18 (By similarity). M-Ras/MRAS binds to the concave side of SHOC2, via LRR 1-10, 12 and 14-16 (By similarity).</text>
</comment>
<comment type="similarity">
    <text evidence="3">Belongs to the SHOC2 family.</text>
</comment>
<evidence type="ECO:0000250" key="1">
    <source>
        <dbReference type="UniProtKB" id="Q9UQ13"/>
    </source>
</evidence>
<evidence type="ECO:0000256" key="2">
    <source>
        <dbReference type="SAM" id="MobiDB-lite"/>
    </source>
</evidence>
<evidence type="ECO:0000305" key="3"/>
<organism>
    <name type="scientific">Mus musculus</name>
    <name type="common">Mouse</name>
    <dbReference type="NCBI Taxonomy" id="10090"/>
    <lineage>
        <taxon>Eukaryota</taxon>
        <taxon>Metazoa</taxon>
        <taxon>Chordata</taxon>
        <taxon>Craniata</taxon>
        <taxon>Vertebrata</taxon>
        <taxon>Euteleostomi</taxon>
        <taxon>Mammalia</taxon>
        <taxon>Eutheria</taxon>
        <taxon>Euarchontoglires</taxon>
        <taxon>Glires</taxon>
        <taxon>Rodentia</taxon>
        <taxon>Myomorpha</taxon>
        <taxon>Muroidea</taxon>
        <taxon>Muridae</taxon>
        <taxon>Murinae</taxon>
        <taxon>Mus</taxon>
        <taxon>Mus</taxon>
    </lineage>
</organism>